<proteinExistence type="predicted"/>
<protein>
    <recommendedName>
        <fullName>Toxin coregulated pilus biosynthesis protein P</fullName>
    </recommendedName>
    <alternativeName>
        <fullName>TCP pilus biosynthesis protein TcpP</fullName>
    </alternativeName>
</protein>
<gene>
    <name type="primary">tcpP</name>
    <name type="ordered locus">VC_0826</name>
</gene>
<dbReference type="EMBL" id="X64098">
    <property type="protein sequence ID" value="CAA45453.1"/>
    <property type="molecule type" value="Genomic_DNA"/>
</dbReference>
<dbReference type="EMBL" id="X74730">
    <property type="protein sequence ID" value="CAA52743.1"/>
    <property type="molecule type" value="Genomic_DNA"/>
</dbReference>
<dbReference type="EMBL" id="AE003852">
    <property type="protein sequence ID" value="AAF93989.1"/>
    <property type="molecule type" value="Genomic_DNA"/>
</dbReference>
<dbReference type="PIR" id="JC4722">
    <property type="entry name" value="JC4722"/>
</dbReference>
<dbReference type="RefSeq" id="NP_230474.1">
    <property type="nucleotide sequence ID" value="NC_002505.1"/>
</dbReference>
<dbReference type="RefSeq" id="WP_000542596.1">
    <property type="nucleotide sequence ID" value="NZ_LT906614.1"/>
</dbReference>
<dbReference type="SMR" id="P29485"/>
<dbReference type="STRING" id="243277.VC_0826"/>
<dbReference type="DNASU" id="2614493"/>
<dbReference type="EnsemblBacteria" id="AAF93989">
    <property type="protein sequence ID" value="AAF93989"/>
    <property type="gene ID" value="VC_0826"/>
</dbReference>
<dbReference type="KEGG" id="vch:VC_0826"/>
<dbReference type="PATRIC" id="fig|243277.26.peg.787"/>
<dbReference type="eggNOG" id="COG3710">
    <property type="taxonomic scope" value="Bacteria"/>
</dbReference>
<dbReference type="HOGENOM" id="CLU_1277186_0_0_6"/>
<dbReference type="PHI-base" id="PHI:10554"/>
<dbReference type="PHI-base" id="PHI:123260"/>
<dbReference type="Proteomes" id="UP000000584">
    <property type="component" value="Chromosome 1"/>
</dbReference>
<dbReference type="GO" id="GO:0005886">
    <property type="term" value="C:plasma membrane"/>
    <property type="evidence" value="ECO:0007669"/>
    <property type="project" value="UniProtKB-SubCell"/>
</dbReference>
<dbReference type="GO" id="GO:0003677">
    <property type="term" value="F:DNA binding"/>
    <property type="evidence" value="ECO:0007669"/>
    <property type="project" value="UniProtKB-KW"/>
</dbReference>
<dbReference type="GO" id="GO:0000160">
    <property type="term" value="P:phosphorelay signal transduction system"/>
    <property type="evidence" value="ECO:0007669"/>
    <property type="project" value="InterPro"/>
</dbReference>
<dbReference type="GO" id="GO:0045893">
    <property type="term" value="P:positive regulation of DNA-templated transcription"/>
    <property type="evidence" value="ECO:0000316"/>
    <property type="project" value="CACAO"/>
</dbReference>
<dbReference type="Gene3D" id="1.10.10.10">
    <property type="entry name" value="Winged helix-like DNA-binding domain superfamily/Winged helix DNA-binding domain"/>
    <property type="match status" value="1"/>
</dbReference>
<dbReference type="InterPro" id="IPR001867">
    <property type="entry name" value="OmpR/PhoB-type_DNA-bd"/>
</dbReference>
<dbReference type="InterPro" id="IPR016032">
    <property type="entry name" value="Sig_transdc_resp-reg_C-effctor"/>
</dbReference>
<dbReference type="InterPro" id="IPR036388">
    <property type="entry name" value="WH-like_DNA-bd_sf"/>
</dbReference>
<dbReference type="Pfam" id="PF00486">
    <property type="entry name" value="Trans_reg_C"/>
    <property type="match status" value="1"/>
</dbReference>
<dbReference type="SMART" id="SM00862">
    <property type="entry name" value="Trans_reg_C"/>
    <property type="match status" value="1"/>
</dbReference>
<dbReference type="SUPFAM" id="SSF46894">
    <property type="entry name" value="C-terminal effector domain of the bipartite response regulators"/>
    <property type="match status" value="1"/>
</dbReference>
<dbReference type="PROSITE" id="PS51755">
    <property type="entry name" value="OMPR_PHOB"/>
    <property type="match status" value="1"/>
</dbReference>
<evidence type="ECO:0000255" key="1"/>
<evidence type="ECO:0000255" key="2">
    <source>
        <dbReference type="PROSITE-ProRule" id="PRU01091"/>
    </source>
</evidence>
<evidence type="ECO:0000305" key="3"/>
<feature type="chain" id="PRO_0000072467" description="Toxin coregulated pilus biosynthesis protein P">
    <location>
        <begin position="1"/>
        <end position="221"/>
    </location>
</feature>
<feature type="transmembrane region" description="Helical" evidence="1">
    <location>
        <begin position="143"/>
        <end position="163"/>
    </location>
</feature>
<feature type="DNA-binding region" description="OmpR/PhoB-type" evidence="2">
    <location>
        <begin position="5"/>
        <end position="109"/>
    </location>
</feature>
<feature type="sequence variant" description="In strain: Z17561.">
    <original>T</original>
    <variation>S</variation>
    <location>
        <position position="20"/>
    </location>
</feature>
<feature type="sequence variant" description="In strain: Z17561.">
    <original>IQT</original>
    <variation>MQA</variation>
    <location>
        <begin position="42"/>
        <end position="44"/>
    </location>
</feature>
<feature type="sequence variant" description="In strain: Z17561.">
    <original>A</original>
    <variation>S</variation>
    <location>
        <position position="56"/>
    </location>
</feature>
<feature type="sequence variant" description="In strain: Z17561.">
    <original>V</original>
    <variation>I</variation>
    <location>
        <position position="118"/>
    </location>
</feature>
<feature type="sequence variant" description="In strain: Z17561.">
    <original>T</original>
    <variation>M</variation>
    <location>
        <position position="199"/>
    </location>
</feature>
<organism>
    <name type="scientific">Vibrio cholerae serotype O1 (strain ATCC 39315 / El Tor Inaba N16961)</name>
    <dbReference type="NCBI Taxonomy" id="243277"/>
    <lineage>
        <taxon>Bacteria</taxon>
        <taxon>Pseudomonadati</taxon>
        <taxon>Pseudomonadota</taxon>
        <taxon>Gammaproteobacteria</taxon>
        <taxon>Vibrionales</taxon>
        <taxon>Vibrionaceae</taxon>
        <taxon>Vibrio</taxon>
    </lineage>
</organism>
<keyword id="KW-1003">Cell membrane</keyword>
<keyword id="KW-0238">DNA-binding</keyword>
<keyword id="KW-0472">Membrane</keyword>
<keyword id="KW-1185">Reference proteome</keyword>
<keyword id="KW-0812">Transmembrane</keyword>
<keyword id="KW-1133">Transmembrane helix</keyword>
<sequence>MGYVRVIYQFPDNLWWNECTNQVYYAQDPMKPERLIGTPSIIQTKLLKILCEYHPAPCPNDQIIKALWPHGFISSESLTQAIKRTRDFLNDEHKTLIENVKLQGYRINIIQVIVSENVVDEADCSQKKSVKERIKIEWGKINVVPYLVFSALYVALLPVIWWSYGQWYQHELAGITHDLRDLARLPGITIQKLSEQKLTFAIDQHQCSVNYEQKTLECTKN</sequence>
<accession>P29485</accession>
<accession>Q56663</accession>
<name>TCPP_VIBCH</name>
<comment type="function">
    <text>Involved in TCP pilus biogenesis.</text>
</comment>
<comment type="subcellular location">
    <subcellularLocation>
        <location evidence="3">Cell membrane</location>
        <topology evidence="3">Single-pass membrane protein</topology>
    </subcellularLocation>
</comment>
<reference key="1">
    <citation type="journal article" date="1996" name="Gene">
        <title>Comparison of the promoter proximal regions of the toxin-co-regulated tcp gene cluster in classical and El Tor strains of Vibrio cholerae O1.</title>
        <authorList>
            <person name="Ogierman M.A."/>
            <person name="Voss E."/>
            <person name="Meaney C."/>
            <person name="Faast R."/>
            <person name="Attridge S.R."/>
            <person name="Manning P.A."/>
        </authorList>
    </citation>
    <scope>NUCLEOTIDE SEQUENCE [GENOMIC DNA]</scope>
    <source>
        <strain>Classical Inaba Z17561 / Serotype O1</strain>
        <strain>El Tor H1 / Serotype O1</strain>
    </source>
</reference>
<reference key="2">
    <citation type="journal article" date="2000" name="Nature">
        <title>DNA sequence of both chromosomes of the cholera pathogen Vibrio cholerae.</title>
        <authorList>
            <person name="Heidelberg J.F."/>
            <person name="Eisen J.A."/>
            <person name="Nelson W.C."/>
            <person name="Clayton R.A."/>
            <person name="Gwinn M.L."/>
            <person name="Dodson R.J."/>
            <person name="Haft D.H."/>
            <person name="Hickey E.K."/>
            <person name="Peterson J.D."/>
            <person name="Umayam L.A."/>
            <person name="Gill S.R."/>
            <person name="Nelson K.E."/>
            <person name="Read T.D."/>
            <person name="Tettelin H."/>
            <person name="Richardson D.L."/>
            <person name="Ermolaeva M.D."/>
            <person name="Vamathevan J.J."/>
            <person name="Bass S."/>
            <person name="Qin H."/>
            <person name="Dragoi I."/>
            <person name="Sellers P."/>
            <person name="McDonald L.A."/>
            <person name="Utterback T.R."/>
            <person name="Fleischmann R.D."/>
            <person name="Nierman W.C."/>
            <person name="White O."/>
            <person name="Salzberg S.L."/>
            <person name="Smith H.O."/>
            <person name="Colwell R.R."/>
            <person name="Mekalanos J.J."/>
            <person name="Venter J.C."/>
            <person name="Fraser C.M."/>
        </authorList>
    </citation>
    <scope>NUCLEOTIDE SEQUENCE [LARGE SCALE GENOMIC DNA]</scope>
    <source>
        <strain>ATCC 39315 / El Tor Inaba N16961</strain>
    </source>
</reference>